<accession>B7LYT1</accession>
<feature type="chain" id="PRO_1000194708" description="Ribose-5-phosphate isomerase A">
    <location>
        <begin position="1"/>
        <end position="219"/>
    </location>
</feature>
<feature type="active site" description="Proton acceptor" evidence="1">
    <location>
        <position position="103"/>
    </location>
</feature>
<feature type="binding site" evidence="1">
    <location>
        <begin position="28"/>
        <end position="31"/>
    </location>
    <ligand>
        <name>substrate</name>
    </ligand>
</feature>
<feature type="binding site" evidence="1">
    <location>
        <begin position="81"/>
        <end position="84"/>
    </location>
    <ligand>
        <name>substrate</name>
    </ligand>
</feature>
<feature type="binding site" evidence="1">
    <location>
        <begin position="94"/>
        <end position="97"/>
    </location>
    <ligand>
        <name>substrate</name>
    </ligand>
</feature>
<feature type="binding site" evidence="1">
    <location>
        <position position="121"/>
    </location>
    <ligand>
        <name>substrate</name>
    </ligand>
</feature>
<organism>
    <name type="scientific">Escherichia coli O8 (strain IAI1)</name>
    <dbReference type="NCBI Taxonomy" id="585034"/>
    <lineage>
        <taxon>Bacteria</taxon>
        <taxon>Pseudomonadati</taxon>
        <taxon>Pseudomonadota</taxon>
        <taxon>Gammaproteobacteria</taxon>
        <taxon>Enterobacterales</taxon>
        <taxon>Enterobacteriaceae</taxon>
        <taxon>Escherichia</taxon>
    </lineage>
</organism>
<protein>
    <recommendedName>
        <fullName evidence="1">Ribose-5-phosphate isomerase A</fullName>
        <ecNumber evidence="1">5.3.1.6</ecNumber>
    </recommendedName>
    <alternativeName>
        <fullName evidence="1">Phosphoriboisomerase A</fullName>
        <shortName evidence="1">PRI</shortName>
    </alternativeName>
</protein>
<gene>
    <name evidence="1" type="primary">rpiA</name>
    <name type="ordered locus">ECIAI1_3034</name>
</gene>
<evidence type="ECO:0000255" key="1">
    <source>
        <dbReference type="HAMAP-Rule" id="MF_00170"/>
    </source>
</evidence>
<reference key="1">
    <citation type="journal article" date="2009" name="PLoS Genet.">
        <title>Organised genome dynamics in the Escherichia coli species results in highly diverse adaptive paths.</title>
        <authorList>
            <person name="Touchon M."/>
            <person name="Hoede C."/>
            <person name="Tenaillon O."/>
            <person name="Barbe V."/>
            <person name="Baeriswyl S."/>
            <person name="Bidet P."/>
            <person name="Bingen E."/>
            <person name="Bonacorsi S."/>
            <person name="Bouchier C."/>
            <person name="Bouvet O."/>
            <person name="Calteau A."/>
            <person name="Chiapello H."/>
            <person name="Clermont O."/>
            <person name="Cruveiller S."/>
            <person name="Danchin A."/>
            <person name="Diard M."/>
            <person name="Dossat C."/>
            <person name="Karoui M.E."/>
            <person name="Frapy E."/>
            <person name="Garry L."/>
            <person name="Ghigo J.M."/>
            <person name="Gilles A.M."/>
            <person name="Johnson J."/>
            <person name="Le Bouguenec C."/>
            <person name="Lescat M."/>
            <person name="Mangenot S."/>
            <person name="Martinez-Jehanne V."/>
            <person name="Matic I."/>
            <person name="Nassif X."/>
            <person name="Oztas S."/>
            <person name="Petit M.A."/>
            <person name="Pichon C."/>
            <person name="Rouy Z."/>
            <person name="Ruf C.S."/>
            <person name="Schneider D."/>
            <person name="Tourret J."/>
            <person name="Vacherie B."/>
            <person name="Vallenet D."/>
            <person name="Medigue C."/>
            <person name="Rocha E.P.C."/>
            <person name="Denamur E."/>
        </authorList>
    </citation>
    <scope>NUCLEOTIDE SEQUENCE [LARGE SCALE GENOMIC DNA]</scope>
    <source>
        <strain>IAI1</strain>
    </source>
</reference>
<proteinExistence type="inferred from homology"/>
<sequence>MTQDELKKAVGWAALQYVQPGTIVGVGTGSTAAHFIDALGTMKGQIEGAVSSSDASTEKLKSLGIHVFDLNEVDSLGIYVDGADEINGHMQMIKGGGAALTREKIIASVAEKFICIADASKQVDILGKFPLPVEVIPMARSAVARQLVKLGGRPEYRQGVVTDNGNVILDVHGMEILDPIAMENAINAIPGVVTVGLFANRGADVALIGTPDGVKTIVK</sequence>
<comment type="function">
    <text evidence="1">Catalyzes the reversible conversion of ribose-5-phosphate to ribulose 5-phosphate.</text>
</comment>
<comment type="catalytic activity">
    <reaction evidence="1">
        <text>aldehydo-D-ribose 5-phosphate = D-ribulose 5-phosphate</text>
        <dbReference type="Rhea" id="RHEA:14657"/>
        <dbReference type="ChEBI" id="CHEBI:58121"/>
        <dbReference type="ChEBI" id="CHEBI:58273"/>
        <dbReference type="EC" id="5.3.1.6"/>
    </reaction>
</comment>
<comment type="pathway">
    <text evidence="1">Carbohydrate degradation; pentose phosphate pathway; D-ribose 5-phosphate from D-ribulose 5-phosphate (non-oxidative stage): step 1/1.</text>
</comment>
<comment type="subunit">
    <text evidence="1">Homodimer.</text>
</comment>
<comment type="similarity">
    <text evidence="1">Belongs to the ribose 5-phosphate isomerase family.</text>
</comment>
<name>RPIA_ECO8A</name>
<keyword id="KW-0413">Isomerase</keyword>
<dbReference type="EC" id="5.3.1.6" evidence="1"/>
<dbReference type="EMBL" id="CU928160">
    <property type="protein sequence ID" value="CAQ99849.1"/>
    <property type="molecule type" value="Genomic_DNA"/>
</dbReference>
<dbReference type="RefSeq" id="WP_000189743.1">
    <property type="nucleotide sequence ID" value="NC_011741.1"/>
</dbReference>
<dbReference type="SMR" id="B7LYT1"/>
<dbReference type="GeneID" id="93779085"/>
<dbReference type="KEGG" id="ecr:ECIAI1_3034"/>
<dbReference type="HOGENOM" id="CLU_056590_1_1_6"/>
<dbReference type="UniPathway" id="UPA00115">
    <property type="reaction ID" value="UER00412"/>
</dbReference>
<dbReference type="GO" id="GO:0005829">
    <property type="term" value="C:cytosol"/>
    <property type="evidence" value="ECO:0007669"/>
    <property type="project" value="TreeGrafter"/>
</dbReference>
<dbReference type="GO" id="GO:0004751">
    <property type="term" value="F:ribose-5-phosphate isomerase activity"/>
    <property type="evidence" value="ECO:0007669"/>
    <property type="project" value="UniProtKB-UniRule"/>
</dbReference>
<dbReference type="GO" id="GO:0006014">
    <property type="term" value="P:D-ribose metabolic process"/>
    <property type="evidence" value="ECO:0007669"/>
    <property type="project" value="TreeGrafter"/>
</dbReference>
<dbReference type="GO" id="GO:0009052">
    <property type="term" value="P:pentose-phosphate shunt, non-oxidative branch"/>
    <property type="evidence" value="ECO:0007669"/>
    <property type="project" value="UniProtKB-UniRule"/>
</dbReference>
<dbReference type="CDD" id="cd01398">
    <property type="entry name" value="RPI_A"/>
    <property type="match status" value="1"/>
</dbReference>
<dbReference type="FunFam" id="3.30.70.260:FF:000004">
    <property type="entry name" value="Ribose-5-phosphate isomerase A"/>
    <property type="match status" value="1"/>
</dbReference>
<dbReference type="FunFam" id="3.40.50.1360:FF:000001">
    <property type="entry name" value="Ribose-5-phosphate isomerase A"/>
    <property type="match status" value="1"/>
</dbReference>
<dbReference type="Gene3D" id="3.30.70.260">
    <property type="match status" value="1"/>
</dbReference>
<dbReference type="Gene3D" id="3.40.50.1360">
    <property type="match status" value="1"/>
</dbReference>
<dbReference type="HAMAP" id="MF_00170">
    <property type="entry name" value="Rib_5P_isom_A"/>
    <property type="match status" value="1"/>
</dbReference>
<dbReference type="InterPro" id="IPR037171">
    <property type="entry name" value="NagB/RpiA_transferase-like"/>
</dbReference>
<dbReference type="InterPro" id="IPR020672">
    <property type="entry name" value="Ribose5P_isomerase_typA_subgr"/>
</dbReference>
<dbReference type="InterPro" id="IPR004788">
    <property type="entry name" value="Ribose5P_isomerase_type_A"/>
</dbReference>
<dbReference type="NCBIfam" id="NF001924">
    <property type="entry name" value="PRK00702.1"/>
    <property type="match status" value="1"/>
</dbReference>
<dbReference type="NCBIfam" id="TIGR00021">
    <property type="entry name" value="rpiA"/>
    <property type="match status" value="1"/>
</dbReference>
<dbReference type="PANTHER" id="PTHR11934">
    <property type="entry name" value="RIBOSE-5-PHOSPHATE ISOMERASE"/>
    <property type="match status" value="1"/>
</dbReference>
<dbReference type="PANTHER" id="PTHR11934:SF0">
    <property type="entry name" value="RIBOSE-5-PHOSPHATE ISOMERASE"/>
    <property type="match status" value="1"/>
</dbReference>
<dbReference type="Pfam" id="PF06026">
    <property type="entry name" value="Rib_5-P_isom_A"/>
    <property type="match status" value="1"/>
</dbReference>
<dbReference type="SUPFAM" id="SSF75445">
    <property type="entry name" value="D-ribose-5-phosphate isomerase (RpiA), lid domain"/>
    <property type="match status" value="1"/>
</dbReference>
<dbReference type="SUPFAM" id="SSF100950">
    <property type="entry name" value="NagB/RpiA/CoA transferase-like"/>
    <property type="match status" value="1"/>
</dbReference>